<evidence type="ECO:0000250" key="1"/>
<evidence type="ECO:0000256" key="2">
    <source>
        <dbReference type="SAM" id="MobiDB-lite"/>
    </source>
</evidence>
<evidence type="ECO:0000305" key="3"/>
<name>RR4_PANGI</name>
<organism>
    <name type="scientific">Panax ginseng</name>
    <name type="common">Korean ginseng</name>
    <dbReference type="NCBI Taxonomy" id="4054"/>
    <lineage>
        <taxon>Eukaryota</taxon>
        <taxon>Viridiplantae</taxon>
        <taxon>Streptophyta</taxon>
        <taxon>Embryophyta</taxon>
        <taxon>Tracheophyta</taxon>
        <taxon>Spermatophyta</taxon>
        <taxon>Magnoliopsida</taxon>
        <taxon>eudicotyledons</taxon>
        <taxon>Gunneridae</taxon>
        <taxon>Pentapetalae</taxon>
        <taxon>asterids</taxon>
        <taxon>campanulids</taxon>
        <taxon>Apiales</taxon>
        <taxon>Araliaceae</taxon>
        <taxon>Panax</taxon>
    </lineage>
</organism>
<sequence>MSRYRGPRFKKIRRLGALPGLTNKRPRAGSDLRNQSRSGKKSQYRIRLEEKQKLRFHYGLTERQLLKYVRIAGKAKGSTGQVLLQLLEMRLDNILFRLGMAPTIPGARQLVNHRHILVNGRIVDIASYRCKPRDIITARDEENSRTLIQNSLDSSSHDELPKHLTLHPFQYKGLVNQIIDSKWVGLKINELLVVEYYSRQT</sequence>
<geneLocation type="chloroplast"/>
<protein>
    <recommendedName>
        <fullName evidence="3">Small ribosomal subunit protein uS4c</fullName>
    </recommendedName>
    <alternativeName>
        <fullName>30S ribosomal protein S4, chloroplastic</fullName>
    </alternativeName>
</protein>
<accession>Q68S04</accession>
<comment type="function">
    <text evidence="1">One of the primary rRNA binding proteins, it binds directly to 16S rRNA where it nucleates assembly of the body of the 30S subunit.</text>
</comment>
<comment type="function">
    <text evidence="1">With S5 and S12 plays an important role in translational accuracy.</text>
</comment>
<comment type="subunit">
    <text evidence="1">Part of the 30S ribosomal subunit. Contacts protein S5. The interaction surface between S4 and S5 is involved in control of translational fidelity (By similarity).</text>
</comment>
<comment type="subcellular location">
    <subcellularLocation>
        <location>Plastid</location>
        <location>Chloroplast</location>
    </subcellularLocation>
</comment>
<comment type="similarity">
    <text evidence="3">Belongs to the universal ribosomal protein uS4 family.</text>
</comment>
<dbReference type="EMBL" id="AY582139">
    <property type="protein sequence ID" value="AAT98511.1"/>
    <property type="molecule type" value="Genomic_DNA"/>
</dbReference>
<dbReference type="RefSeq" id="YP_086968.1">
    <property type="nucleotide sequence ID" value="NC_006290.1"/>
</dbReference>
<dbReference type="SMR" id="Q68S04"/>
<dbReference type="GeneID" id="3021468"/>
<dbReference type="GO" id="GO:0009507">
    <property type="term" value="C:chloroplast"/>
    <property type="evidence" value="ECO:0007669"/>
    <property type="project" value="UniProtKB-SubCell"/>
</dbReference>
<dbReference type="GO" id="GO:0015935">
    <property type="term" value="C:small ribosomal subunit"/>
    <property type="evidence" value="ECO:0007669"/>
    <property type="project" value="InterPro"/>
</dbReference>
<dbReference type="GO" id="GO:0019843">
    <property type="term" value="F:rRNA binding"/>
    <property type="evidence" value="ECO:0007669"/>
    <property type="project" value="UniProtKB-UniRule"/>
</dbReference>
<dbReference type="GO" id="GO:0003735">
    <property type="term" value="F:structural constituent of ribosome"/>
    <property type="evidence" value="ECO:0007669"/>
    <property type="project" value="InterPro"/>
</dbReference>
<dbReference type="GO" id="GO:0042274">
    <property type="term" value="P:ribosomal small subunit biogenesis"/>
    <property type="evidence" value="ECO:0007669"/>
    <property type="project" value="TreeGrafter"/>
</dbReference>
<dbReference type="GO" id="GO:0006412">
    <property type="term" value="P:translation"/>
    <property type="evidence" value="ECO:0007669"/>
    <property type="project" value="UniProtKB-UniRule"/>
</dbReference>
<dbReference type="CDD" id="cd00165">
    <property type="entry name" value="S4"/>
    <property type="match status" value="1"/>
</dbReference>
<dbReference type="FunFam" id="1.10.1050.10:FF:000002">
    <property type="entry name" value="30S ribosomal protein S4, chloroplastic"/>
    <property type="match status" value="1"/>
</dbReference>
<dbReference type="FunFam" id="3.10.290.10:FF:000081">
    <property type="entry name" value="30S ribosomal protein S4, chloroplastic"/>
    <property type="match status" value="1"/>
</dbReference>
<dbReference type="Gene3D" id="1.10.1050.10">
    <property type="entry name" value="Ribosomal Protein S4 Delta 41, Chain A, domain 1"/>
    <property type="match status" value="1"/>
</dbReference>
<dbReference type="Gene3D" id="3.10.290.10">
    <property type="entry name" value="RNA-binding S4 domain"/>
    <property type="match status" value="1"/>
</dbReference>
<dbReference type="HAMAP" id="MF_01306_B">
    <property type="entry name" value="Ribosomal_uS4_B"/>
    <property type="match status" value="1"/>
</dbReference>
<dbReference type="InterPro" id="IPR022801">
    <property type="entry name" value="Ribosomal_uS4"/>
</dbReference>
<dbReference type="InterPro" id="IPR005709">
    <property type="entry name" value="Ribosomal_uS4_bac-type"/>
</dbReference>
<dbReference type="InterPro" id="IPR018079">
    <property type="entry name" value="Ribosomal_uS4_CS"/>
</dbReference>
<dbReference type="InterPro" id="IPR001912">
    <property type="entry name" value="Ribosomal_uS4_N"/>
</dbReference>
<dbReference type="InterPro" id="IPR002942">
    <property type="entry name" value="S4_RNA-bd"/>
</dbReference>
<dbReference type="InterPro" id="IPR036986">
    <property type="entry name" value="S4_RNA-bd_sf"/>
</dbReference>
<dbReference type="NCBIfam" id="NF003717">
    <property type="entry name" value="PRK05327.1"/>
    <property type="match status" value="1"/>
</dbReference>
<dbReference type="NCBIfam" id="TIGR01017">
    <property type="entry name" value="rpsD_bact"/>
    <property type="match status" value="1"/>
</dbReference>
<dbReference type="PANTHER" id="PTHR11831">
    <property type="entry name" value="30S 40S RIBOSOMAL PROTEIN"/>
    <property type="match status" value="1"/>
</dbReference>
<dbReference type="PANTHER" id="PTHR11831:SF4">
    <property type="entry name" value="SMALL RIBOSOMAL SUBUNIT PROTEIN US4M"/>
    <property type="match status" value="1"/>
</dbReference>
<dbReference type="Pfam" id="PF00163">
    <property type="entry name" value="Ribosomal_S4"/>
    <property type="match status" value="1"/>
</dbReference>
<dbReference type="Pfam" id="PF01479">
    <property type="entry name" value="S4"/>
    <property type="match status" value="1"/>
</dbReference>
<dbReference type="SMART" id="SM01390">
    <property type="entry name" value="Ribosomal_S4"/>
    <property type="match status" value="1"/>
</dbReference>
<dbReference type="SMART" id="SM00363">
    <property type="entry name" value="S4"/>
    <property type="match status" value="1"/>
</dbReference>
<dbReference type="SUPFAM" id="SSF55174">
    <property type="entry name" value="Alpha-L RNA-binding motif"/>
    <property type="match status" value="1"/>
</dbReference>
<dbReference type="PROSITE" id="PS00632">
    <property type="entry name" value="RIBOSOMAL_S4"/>
    <property type="match status" value="1"/>
</dbReference>
<dbReference type="PROSITE" id="PS50889">
    <property type="entry name" value="S4"/>
    <property type="match status" value="1"/>
</dbReference>
<reference key="1">
    <citation type="journal article" date="2004" name="DNA Res.">
        <title>Complete chloroplast genome sequence from Korea ginseng (Panax schinseng Nees) and comparative analysis of sequence evolution among 17 vascular plants.</title>
        <authorList>
            <person name="Kim K.-J."/>
            <person name="Lee H.-L."/>
        </authorList>
    </citation>
    <scope>NUCLEOTIDE SEQUENCE [LARGE SCALE GENOMIC DNA]</scope>
</reference>
<keyword id="KW-0150">Chloroplast</keyword>
<keyword id="KW-0934">Plastid</keyword>
<keyword id="KW-0687">Ribonucleoprotein</keyword>
<keyword id="KW-0689">Ribosomal protein</keyword>
<keyword id="KW-0694">RNA-binding</keyword>
<keyword id="KW-0699">rRNA-binding</keyword>
<feature type="chain" id="PRO_0000132643" description="Small ribosomal subunit protein uS4c">
    <location>
        <begin position="1"/>
        <end position="201"/>
    </location>
</feature>
<feature type="domain" description="S4 RNA-binding">
    <location>
        <begin position="89"/>
        <end position="152"/>
    </location>
</feature>
<feature type="region of interest" description="Disordered" evidence="2">
    <location>
        <begin position="15"/>
        <end position="43"/>
    </location>
</feature>
<proteinExistence type="inferred from homology"/>
<gene>
    <name type="primary">rps4</name>
    <name type="ORF">PSC0476</name>
</gene>